<organism>
    <name type="scientific">Acinetobacter baumannii (strain ACICU)</name>
    <dbReference type="NCBI Taxonomy" id="405416"/>
    <lineage>
        <taxon>Bacteria</taxon>
        <taxon>Pseudomonadati</taxon>
        <taxon>Pseudomonadota</taxon>
        <taxon>Gammaproteobacteria</taxon>
        <taxon>Moraxellales</taxon>
        <taxon>Moraxellaceae</taxon>
        <taxon>Acinetobacter</taxon>
        <taxon>Acinetobacter calcoaceticus/baumannii complex</taxon>
    </lineage>
</organism>
<feature type="chain" id="PRO_0000348647" description="tRNA-cytidine(32) 2-sulfurtransferase">
    <location>
        <begin position="1"/>
        <end position="301"/>
    </location>
</feature>
<feature type="short sequence motif" description="PP-loop motif" evidence="1">
    <location>
        <begin position="55"/>
        <end position="60"/>
    </location>
</feature>
<feature type="binding site" evidence="1">
    <location>
        <position position="130"/>
    </location>
    <ligand>
        <name>[4Fe-4S] cluster</name>
        <dbReference type="ChEBI" id="CHEBI:49883"/>
    </ligand>
</feature>
<feature type="binding site" evidence="1">
    <location>
        <position position="133"/>
    </location>
    <ligand>
        <name>[4Fe-4S] cluster</name>
        <dbReference type="ChEBI" id="CHEBI:49883"/>
    </ligand>
</feature>
<feature type="binding site" evidence="1">
    <location>
        <position position="221"/>
    </location>
    <ligand>
        <name>[4Fe-4S] cluster</name>
        <dbReference type="ChEBI" id="CHEBI:49883"/>
    </ligand>
</feature>
<name>TTCA_ACIBC</name>
<reference key="1">
    <citation type="journal article" date="2008" name="Antimicrob. Agents Chemother.">
        <title>Whole-genome pyrosequencing of an epidemic multidrug-resistant Acinetobacter baumannii strain belonging to the European clone II group.</title>
        <authorList>
            <person name="Iacono M."/>
            <person name="Villa L."/>
            <person name="Fortini D."/>
            <person name="Bordoni R."/>
            <person name="Imperi F."/>
            <person name="Bonnal R.J."/>
            <person name="Sicheritz-Ponten T."/>
            <person name="De Bellis G."/>
            <person name="Visca P."/>
            <person name="Cassone A."/>
            <person name="Carattoli A."/>
        </authorList>
    </citation>
    <scope>NUCLEOTIDE SEQUENCE [LARGE SCALE GENOMIC DNA]</scope>
    <source>
        <strain>ACICU</strain>
    </source>
</reference>
<proteinExistence type="inferred from homology"/>
<accession>B2HXA8</accession>
<evidence type="ECO:0000255" key="1">
    <source>
        <dbReference type="HAMAP-Rule" id="MF_01850"/>
    </source>
</evidence>
<sequence>MYAPVESNEGFNFKPELPTSSAYYRLLKKLRRQVGHAIRDFNMIEDGDKVMVCVSGGKDSYTLLDILLQFKRIAPINFDIVAVNLDQKQPGFPEDVLPRYMEENNIPYYILEKDTYSITKRLTPEGKTYCAVCSRLRRGSLYGFAQEIGATKVALGHHRDDIIATFFLNLFHGGSLKAMPPKLLSSDKKNILIRPLAYVEEKDIIKYAELRKFPIIPCNLCGSQENLQRAMINEMLREWDKQYPKRLHSIFGALQNVSPSQLADRDLFDFEVLDSQRELDFKDPEELKKRLDVVNLSFAAE</sequence>
<gene>
    <name evidence="1" type="primary">ttcA</name>
    <name type="ordered locus">ACICU_02900</name>
</gene>
<keyword id="KW-0004">4Fe-4S</keyword>
<keyword id="KW-0067">ATP-binding</keyword>
<keyword id="KW-0963">Cytoplasm</keyword>
<keyword id="KW-0408">Iron</keyword>
<keyword id="KW-0411">Iron-sulfur</keyword>
<keyword id="KW-0460">Magnesium</keyword>
<keyword id="KW-0479">Metal-binding</keyword>
<keyword id="KW-0547">Nucleotide-binding</keyword>
<keyword id="KW-0694">RNA-binding</keyword>
<keyword id="KW-0808">Transferase</keyword>
<keyword id="KW-0819">tRNA processing</keyword>
<keyword id="KW-0820">tRNA-binding</keyword>
<comment type="function">
    <text evidence="1">Catalyzes the ATP-dependent 2-thiolation of cytidine in position 32 of tRNA, to form 2-thiocytidine (s(2)C32). The sulfur atoms are provided by the cysteine/cysteine desulfurase (IscS) system.</text>
</comment>
<comment type="catalytic activity">
    <reaction evidence="1">
        <text>cytidine(32) in tRNA + S-sulfanyl-L-cysteinyl-[cysteine desulfurase] + AH2 + ATP = 2-thiocytidine(32) in tRNA + L-cysteinyl-[cysteine desulfurase] + A + AMP + diphosphate + H(+)</text>
        <dbReference type="Rhea" id="RHEA:57048"/>
        <dbReference type="Rhea" id="RHEA-COMP:10288"/>
        <dbReference type="Rhea" id="RHEA-COMP:12157"/>
        <dbReference type="Rhea" id="RHEA-COMP:12158"/>
        <dbReference type="Rhea" id="RHEA-COMP:14821"/>
        <dbReference type="ChEBI" id="CHEBI:13193"/>
        <dbReference type="ChEBI" id="CHEBI:15378"/>
        <dbReference type="ChEBI" id="CHEBI:17499"/>
        <dbReference type="ChEBI" id="CHEBI:29950"/>
        <dbReference type="ChEBI" id="CHEBI:30616"/>
        <dbReference type="ChEBI" id="CHEBI:33019"/>
        <dbReference type="ChEBI" id="CHEBI:61963"/>
        <dbReference type="ChEBI" id="CHEBI:82748"/>
        <dbReference type="ChEBI" id="CHEBI:141453"/>
        <dbReference type="ChEBI" id="CHEBI:456215"/>
    </reaction>
    <physiologicalReaction direction="left-to-right" evidence="1">
        <dbReference type="Rhea" id="RHEA:57049"/>
    </physiologicalReaction>
</comment>
<comment type="cofactor">
    <cofactor evidence="1">
        <name>Mg(2+)</name>
        <dbReference type="ChEBI" id="CHEBI:18420"/>
    </cofactor>
</comment>
<comment type="cofactor">
    <cofactor evidence="1">
        <name>[4Fe-4S] cluster</name>
        <dbReference type="ChEBI" id="CHEBI:49883"/>
    </cofactor>
    <text evidence="1">Binds 1 [4Fe-4S] cluster per subunit. The cluster is chelated by three Cys residues, the fourth Fe has a free coordination site that may bind a sulfur atom transferred from the persulfide of IscS.</text>
</comment>
<comment type="pathway">
    <text evidence="1">tRNA modification.</text>
</comment>
<comment type="subunit">
    <text evidence="1">Homodimer.</text>
</comment>
<comment type="subcellular location">
    <subcellularLocation>
        <location evidence="1">Cytoplasm</location>
    </subcellularLocation>
</comment>
<comment type="miscellaneous">
    <text evidence="1">The thiolation reaction likely consists of two steps: a first activation step by ATP to form an adenylated intermediate of the target base of tRNA, and a second nucleophilic substitution step of the sulfur (S) atom supplied by the hydrosulfide attached to the Fe-S cluster.</text>
</comment>
<comment type="similarity">
    <text evidence="1">Belongs to the TtcA family.</text>
</comment>
<dbReference type="EC" id="2.8.1.-" evidence="1"/>
<dbReference type="EMBL" id="CP000863">
    <property type="protein sequence ID" value="ACC58212.1"/>
    <property type="molecule type" value="Genomic_DNA"/>
</dbReference>
<dbReference type="RefSeq" id="WP_000271249.1">
    <property type="nucleotide sequence ID" value="NZ_CP031380.1"/>
</dbReference>
<dbReference type="SMR" id="B2HXA8"/>
<dbReference type="KEGG" id="abc:ACICU_02900"/>
<dbReference type="HOGENOM" id="CLU_026481_0_0_6"/>
<dbReference type="Proteomes" id="UP000008839">
    <property type="component" value="Chromosome"/>
</dbReference>
<dbReference type="GO" id="GO:0005737">
    <property type="term" value="C:cytoplasm"/>
    <property type="evidence" value="ECO:0007669"/>
    <property type="project" value="UniProtKB-SubCell"/>
</dbReference>
<dbReference type="GO" id="GO:0051539">
    <property type="term" value="F:4 iron, 4 sulfur cluster binding"/>
    <property type="evidence" value="ECO:0007669"/>
    <property type="project" value="UniProtKB-UniRule"/>
</dbReference>
<dbReference type="GO" id="GO:0005524">
    <property type="term" value="F:ATP binding"/>
    <property type="evidence" value="ECO:0007669"/>
    <property type="project" value="UniProtKB-UniRule"/>
</dbReference>
<dbReference type="GO" id="GO:0000287">
    <property type="term" value="F:magnesium ion binding"/>
    <property type="evidence" value="ECO:0007669"/>
    <property type="project" value="UniProtKB-UniRule"/>
</dbReference>
<dbReference type="GO" id="GO:0016783">
    <property type="term" value="F:sulfurtransferase activity"/>
    <property type="evidence" value="ECO:0007669"/>
    <property type="project" value="UniProtKB-UniRule"/>
</dbReference>
<dbReference type="GO" id="GO:0000049">
    <property type="term" value="F:tRNA binding"/>
    <property type="evidence" value="ECO:0007669"/>
    <property type="project" value="UniProtKB-KW"/>
</dbReference>
<dbReference type="GO" id="GO:0034227">
    <property type="term" value="P:tRNA thio-modification"/>
    <property type="evidence" value="ECO:0007669"/>
    <property type="project" value="UniProtKB-UniRule"/>
</dbReference>
<dbReference type="CDD" id="cd24138">
    <property type="entry name" value="TtcA-like"/>
    <property type="match status" value="1"/>
</dbReference>
<dbReference type="Gene3D" id="3.40.50.620">
    <property type="entry name" value="HUPs"/>
    <property type="match status" value="1"/>
</dbReference>
<dbReference type="HAMAP" id="MF_01850">
    <property type="entry name" value="TtcA"/>
    <property type="match status" value="1"/>
</dbReference>
<dbReference type="InterPro" id="IPR014729">
    <property type="entry name" value="Rossmann-like_a/b/a_fold"/>
</dbReference>
<dbReference type="InterPro" id="IPR011063">
    <property type="entry name" value="TilS/TtcA_N"/>
</dbReference>
<dbReference type="InterPro" id="IPR012089">
    <property type="entry name" value="tRNA_Cyd_32_2_STrfase"/>
</dbReference>
<dbReference type="InterPro" id="IPR035107">
    <property type="entry name" value="tRNA_thiolation_TtcA_Ctu1"/>
</dbReference>
<dbReference type="NCBIfam" id="NF007972">
    <property type="entry name" value="PRK10696.1"/>
    <property type="match status" value="1"/>
</dbReference>
<dbReference type="PANTHER" id="PTHR43686:SF1">
    <property type="entry name" value="AMINOTRAN_5 DOMAIN-CONTAINING PROTEIN"/>
    <property type="match status" value="1"/>
</dbReference>
<dbReference type="PANTHER" id="PTHR43686">
    <property type="entry name" value="SULFURTRANSFERASE-RELATED"/>
    <property type="match status" value="1"/>
</dbReference>
<dbReference type="Pfam" id="PF01171">
    <property type="entry name" value="ATP_bind_3"/>
    <property type="match status" value="1"/>
</dbReference>
<dbReference type="PIRSF" id="PIRSF004976">
    <property type="entry name" value="ATPase_YdaO"/>
    <property type="match status" value="1"/>
</dbReference>
<dbReference type="SUPFAM" id="SSF52402">
    <property type="entry name" value="Adenine nucleotide alpha hydrolases-like"/>
    <property type="match status" value="1"/>
</dbReference>
<protein>
    <recommendedName>
        <fullName evidence="1">tRNA-cytidine(32) 2-sulfurtransferase</fullName>
        <ecNumber evidence="1">2.8.1.-</ecNumber>
    </recommendedName>
    <alternativeName>
        <fullName evidence="1">Two-thiocytidine biosynthesis protein A</fullName>
    </alternativeName>
    <alternativeName>
        <fullName evidence="1">tRNA 2-thiocytidine biosynthesis protein TtcA</fullName>
    </alternativeName>
</protein>